<evidence type="ECO:0000255" key="1">
    <source>
        <dbReference type="HAMAP-Rule" id="MF_00318"/>
    </source>
</evidence>
<organism>
    <name type="scientific">Escherichia coli O81 (strain ED1a)</name>
    <dbReference type="NCBI Taxonomy" id="585397"/>
    <lineage>
        <taxon>Bacteria</taxon>
        <taxon>Pseudomonadati</taxon>
        <taxon>Pseudomonadota</taxon>
        <taxon>Gammaproteobacteria</taxon>
        <taxon>Enterobacterales</taxon>
        <taxon>Enterobacteriaceae</taxon>
        <taxon>Escherichia</taxon>
    </lineage>
</organism>
<keyword id="KW-0963">Cytoplasm</keyword>
<keyword id="KW-0324">Glycolysis</keyword>
<keyword id="KW-0456">Lyase</keyword>
<keyword id="KW-0460">Magnesium</keyword>
<keyword id="KW-0479">Metal-binding</keyword>
<keyword id="KW-0964">Secreted</keyword>
<accession>B7MZ75</accession>
<reference key="1">
    <citation type="journal article" date="2009" name="PLoS Genet.">
        <title>Organised genome dynamics in the Escherichia coli species results in highly diverse adaptive paths.</title>
        <authorList>
            <person name="Touchon M."/>
            <person name="Hoede C."/>
            <person name="Tenaillon O."/>
            <person name="Barbe V."/>
            <person name="Baeriswyl S."/>
            <person name="Bidet P."/>
            <person name="Bingen E."/>
            <person name="Bonacorsi S."/>
            <person name="Bouchier C."/>
            <person name="Bouvet O."/>
            <person name="Calteau A."/>
            <person name="Chiapello H."/>
            <person name="Clermont O."/>
            <person name="Cruveiller S."/>
            <person name="Danchin A."/>
            <person name="Diard M."/>
            <person name="Dossat C."/>
            <person name="Karoui M.E."/>
            <person name="Frapy E."/>
            <person name="Garry L."/>
            <person name="Ghigo J.M."/>
            <person name="Gilles A.M."/>
            <person name="Johnson J."/>
            <person name="Le Bouguenec C."/>
            <person name="Lescat M."/>
            <person name="Mangenot S."/>
            <person name="Martinez-Jehanne V."/>
            <person name="Matic I."/>
            <person name="Nassif X."/>
            <person name="Oztas S."/>
            <person name="Petit M.A."/>
            <person name="Pichon C."/>
            <person name="Rouy Z."/>
            <person name="Ruf C.S."/>
            <person name="Schneider D."/>
            <person name="Tourret J."/>
            <person name="Vacherie B."/>
            <person name="Vallenet D."/>
            <person name="Medigue C."/>
            <person name="Rocha E.P.C."/>
            <person name="Denamur E."/>
        </authorList>
    </citation>
    <scope>NUCLEOTIDE SEQUENCE [LARGE SCALE GENOMIC DNA]</scope>
    <source>
        <strain>ED1a</strain>
    </source>
</reference>
<dbReference type="EC" id="4.2.1.11" evidence="1"/>
<dbReference type="EMBL" id="CU928162">
    <property type="protein sequence ID" value="CAR09392.2"/>
    <property type="molecule type" value="Genomic_DNA"/>
</dbReference>
<dbReference type="RefSeq" id="WP_000036723.1">
    <property type="nucleotide sequence ID" value="NC_011745.1"/>
</dbReference>
<dbReference type="SMR" id="B7MZ75"/>
<dbReference type="GeneID" id="93779219"/>
<dbReference type="KEGG" id="ecq:ECED1_3232"/>
<dbReference type="HOGENOM" id="CLU_031223_2_1_6"/>
<dbReference type="UniPathway" id="UPA00109">
    <property type="reaction ID" value="UER00187"/>
</dbReference>
<dbReference type="Proteomes" id="UP000000748">
    <property type="component" value="Chromosome"/>
</dbReference>
<dbReference type="GO" id="GO:0009986">
    <property type="term" value="C:cell surface"/>
    <property type="evidence" value="ECO:0007669"/>
    <property type="project" value="UniProtKB-SubCell"/>
</dbReference>
<dbReference type="GO" id="GO:0005576">
    <property type="term" value="C:extracellular region"/>
    <property type="evidence" value="ECO:0007669"/>
    <property type="project" value="UniProtKB-SubCell"/>
</dbReference>
<dbReference type="GO" id="GO:0000015">
    <property type="term" value="C:phosphopyruvate hydratase complex"/>
    <property type="evidence" value="ECO:0007669"/>
    <property type="project" value="InterPro"/>
</dbReference>
<dbReference type="GO" id="GO:0000287">
    <property type="term" value="F:magnesium ion binding"/>
    <property type="evidence" value="ECO:0007669"/>
    <property type="project" value="UniProtKB-UniRule"/>
</dbReference>
<dbReference type="GO" id="GO:0004634">
    <property type="term" value="F:phosphopyruvate hydratase activity"/>
    <property type="evidence" value="ECO:0007669"/>
    <property type="project" value="UniProtKB-UniRule"/>
</dbReference>
<dbReference type="GO" id="GO:0006096">
    <property type="term" value="P:glycolytic process"/>
    <property type="evidence" value="ECO:0007669"/>
    <property type="project" value="UniProtKB-UniRule"/>
</dbReference>
<dbReference type="CDD" id="cd03313">
    <property type="entry name" value="enolase"/>
    <property type="match status" value="1"/>
</dbReference>
<dbReference type="FunFam" id="3.20.20.120:FF:000001">
    <property type="entry name" value="Enolase"/>
    <property type="match status" value="1"/>
</dbReference>
<dbReference type="FunFam" id="3.30.390.10:FF:000001">
    <property type="entry name" value="Enolase"/>
    <property type="match status" value="1"/>
</dbReference>
<dbReference type="Gene3D" id="3.20.20.120">
    <property type="entry name" value="Enolase-like C-terminal domain"/>
    <property type="match status" value="1"/>
</dbReference>
<dbReference type="Gene3D" id="3.30.390.10">
    <property type="entry name" value="Enolase-like, N-terminal domain"/>
    <property type="match status" value="1"/>
</dbReference>
<dbReference type="HAMAP" id="MF_00318">
    <property type="entry name" value="Enolase"/>
    <property type="match status" value="1"/>
</dbReference>
<dbReference type="InterPro" id="IPR000941">
    <property type="entry name" value="Enolase"/>
</dbReference>
<dbReference type="InterPro" id="IPR036849">
    <property type="entry name" value="Enolase-like_C_sf"/>
</dbReference>
<dbReference type="InterPro" id="IPR029017">
    <property type="entry name" value="Enolase-like_N"/>
</dbReference>
<dbReference type="InterPro" id="IPR020810">
    <property type="entry name" value="Enolase_C"/>
</dbReference>
<dbReference type="InterPro" id="IPR020809">
    <property type="entry name" value="Enolase_CS"/>
</dbReference>
<dbReference type="InterPro" id="IPR020811">
    <property type="entry name" value="Enolase_N"/>
</dbReference>
<dbReference type="NCBIfam" id="TIGR01060">
    <property type="entry name" value="eno"/>
    <property type="match status" value="1"/>
</dbReference>
<dbReference type="PANTHER" id="PTHR11902">
    <property type="entry name" value="ENOLASE"/>
    <property type="match status" value="1"/>
</dbReference>
<dbReference type="PANTHER" id="PTHR11902:SF1">
    <property type="entry name" value="ENOLASE"/>
    <property type="match status" value="1"/>
</dbReference>
<dbReference type="Pfam" id="PF00113">
    <property type="entry name" value="Enolase_C"/>
    <property type="match status" value="1"/>
</dbReference>
<dbReference type="Pfam" id="PF03952">
    <property type="entry name" value="Enolase_N"/>
    <property type="match status" value="1"/>
</dbReference>
<dbReference type="PIRSF" id="PIRSF001400">
    <property type="entry name" value="Enolase"/>
    <property type="match status" value="1"/>
</dbReference>
<dbReference type="PRINTS" id="PR00148">
    <property type="entry name" value="ENOLASE"/>
</dbReference>
<dbReference type="SFLD" id="SFLDS00001">
    <property type="entry name" value="Enolase"/>
    <property type="match status" value="1"/>
</dbReference>
<dbReference type="SFLD" id="SFLDF00002">
    <property type="entry name" value="enolase"/>
    <property type="match status" value="1"/>
</dbReference>
<dbReference type="SMART" id="SM01192">
    <property type="entry name" value="Enolase_C"/>
    <property type="match status" value="1"/>
</dbReference>
<dbReference type="SMART" id="SM01193">
    <property type="entry name" value="Enolase_N"/>
    <property type="match status" value="1"/>
</dbReference>
<dbReference type="SUPFAM" id="SSF51604">
    <property type="entry name" value="Enolase C-terminal domain-like"/>
    <property type="match status" value="1"/>
</dbReference>
<dbReference type="SUPFAM" id="SSF54826">
    <property type="entry name" value="Enolase N-terminal domain-like"/>
    <property type="match status" value="1"/>
</dbReference>
<dbReference type="PROSITE" id="PS00164">
    <property type="entry name" value="ENOLASE"/>
    <property type="match status" value="1"/>
</dbReference>
<name>ENO_ECO81</name>
<proteinExistence type="inferred from homology"/>
<sequence length="432" mass="45655">MSKIVKIIGREIIDSRGNPTVEAEVHLEGGFVGMAAAPSGASTGSREALELRDGDKSRFLGKGVTKAVAAVNGPIAQALIGKDAKDQAGIDKIMIDLDGTENKSKFGANAILAVSLANAKAAAAAKGMPLYEHIAELNGTPGKYSMPVPMMNIINGGEHADNNVDIQEFMIQPVGAKTVKEAIRMGSEVFHHLAKVLKAKGMNTAVGDEGGYAPNLGSNAEALAVIAEAVKAAGYELGKDITLAMDCAASEFYKDGKYVLAGEGNKAFTSEEFTHFLEELTKQYPIVSIEDGLDESDWDGFAYQTKVLGDKIQLVGDDLFVTNTKILKEGIEKGIANSILIKFNQIGSLTETLAAIKMAKDAGYTAVISHRSGETEDATIADLAVGTAAGQIKTGSMSRSDRVAKYNQLIRIEEALGEKAPYNGRKEIKGQA</sequence>
<comment type="function">
    <text evidence="1">Catalyzes the reversible conversion of 2-phosphoglycerate (2-PG) into phosphoenolpyruvate (PEP). It is essential for the degradation of carbohydrates via glycolysis.</text>
</comment>
<comment type="catalytic activity">
    <reaction evidence="1">
        <text>(2R)-2-phosphoglycerate = phosphoenolpyruvate + H2O</text>
        <dbReference type="Rhea" id="RHEA:10164"/>
        <dbReference type="ChEBI" id="CHEBI:15377"/>
        <dbReference type="ChEBI" id="CHEBI:58289"/>
        <dbReference type="ChEBI" id="CHEBI:58702"/>
        <dbReference type="EC" id="4.2.1.11"/>
    </reaction>
</comment>
<comment type="cofactor">
    <cofactor evidence="1">
        <name>Mg(2+)</name>
        <dbReference type="ChEBI" id="CHEBI:18420"/>
    </cofactor>
    <text evidence="1">Binds a second Mg(2+) ion via substrate during catalysis.</text>
</comment>
<comment type="pathway">
    <text evidence="1">Carbohydrate degradation; glycolysis; pyruvate from D-glyceraldehyde 3-phosphate: step 4/5.</text>
</comment>
<comment type="subunit">
    <text evidence="1">Component of the RNA degradosome, a multiprotein complex involved in RNA processing and mRNA degradation.</text>
</comment>
<comment type="subcellular location">
    <subcellularLocation>
        <location evidence="1">Cytoplasm</location>
    </subcellularLocation>
    <subcellularLocation>
        <location evidence="1">Secreted</location>
    </subcellularLocation>
    <subcellularLocation>
        <location evidence="1">Cell surface</location>
    </subcellularLocation>
    <text evidence="1">Fractions of enolase are present in both the cytoplasm and on the cell surface.</text>
</comment>
<comment type="similarity">
    <text evidence="1">Belongs to the enolase family.</text>
</comment>
<protein>
    <recommendedName>
        <fullName evidence="1">Enolase</fullName>
        <ecNumber evidence="1">4.2.1.11</ecNumber>
    </recommendedName>
    <alternativeName>
        <fullName evidence="1">2-phospho-D-glycerate hydro-lyase</fullName>
    </alternativeName>
    <alternativeName>
        <fullName evidence="1">2-phosphoglycerate dehydratase</fullName>
    </alternativeName>
</protein>
<gene>
    <name evidence="1" type="primary">eno</name>
    <name type="ordered locus">ECED1_3232</name>
</gene>
<feature type="chain" id="PRO_1000189950" description="Enolase">
    <location>
        <begin position="1"/>
        <end position="432"/>
    </location>
</feature>
<feature type="active site" description="Proton donor" evidence="1">
    <location>
        <position position="209"/>
    </location>
</feature>
<feature type="active site" description="Proton acceptor" evidence="1">
    <location>
        <position position="342"/>
    </location>
</feature>
<feature type="binding site" evidence="1">
    <location>
        <position position="167"/>
    </location>
    <ligand>
        <name>(2R)-2-phosphoglycerate</name>
        <dbReference type="ChEBI" id="CHEBI:58289"/>
    </ligand>
</feature>
<feature type="binding site" evidence="1">
    <location>
        <position position="246"/>
    </location>
    <ligand>
        <name>Mg(2+)</name>
        <dbReference type="ChEBI" id="CHEBI:18420"/>
    </ligand>
</feature>
<feature type="binding site" evidence="1">
    <location>
        <position position="290"/>
    </location>
    <ligand>
        <name>Mg(2+)</name>
        <dbReference type="ChEBI" id="CHEBI:18420"/>
    </ligand>
</feature>
<feature type="binding site" evidence="1">
    <location>
        <position position="317"/>
    </location>
    <ligand>
        <name>Mg(2+)</name>
        <dbReference type="ChEBI" id="CHEBI:18420"/>
    </ligand>
</feature>
<feature type="binding site" evidence="1">
    <location>
        <position position="342"/>
    </location>
    <ligand>
        <name>(2R)-2-phosphoglycerate</name>
        <dbReference type="ChEBI" id="CHEBI:58289"/>
    </ligand>
</feature>
<feature type="binding site" evidence="1">
    <location>
        <position position="371"/>
    </location>
    <ligand>
        <name>(2R)-2-phosphoglycerate</name>
        <dbReference type="ChEBI" id="CHEBI:58289"/>
    </ligand>
</feature>
<feature type="binding site" evidence="1">
    <location>
        <position position="372"/>
    </location>
    <ligand>
        <name>(2R)-2-phosphoglycerate</name>
        <dbReference type="ChEBI" id="CHEBI:58289"/>
    </ligand>
</feature>
<feature type="binding site" evidence="1">
    <location>
        <position position="393"/>
    </location>
    <ligand>
        <name>(2R)-2-phosphoglycerate</name>
        <dbReference type="ChEBI" id="CHEBI:58289"/>
    </ligand>
</feature>